<organism>
    <name type="scientific">Nanoarchaeum equitans (strain Kin4-M)</name>
    <dbReference type="NCBI Taxonomy" id="228908"/>
    <lineage>
        <taxon>Archaea</taxon>
        <taxon>Nanobdellota</taxon>
        <taxon>Candidatus Nanoarchaeia</taxon>
        <taxon>Nanoarchaeales</taxon>
        <taxon>Nanoarchaeaceae</taxon>
        <taxon>Nanoarchaeum</taxon>
    </lineage>
</organism>
<keyword id="KW-1185">Reference proteome</keyword>
<keyword id="KW-0687">Ribonucleoprotein</keyword>
<keyword id="KW-0689">Ribosomal protein</keyword>
<sequence>MAEKREDIPTNVVKGDTVIWSKAYPARVVEIVGRTGTTGEVTQVIVEILEGKDAGRLIRRNVKGPVRVGDILMLRETEIEARPLEYSK</sequence>
<dbReference type="EMBL" id="AE017199">
    <property type="protein sequence ID" value="AAR39208.1"/>
    <property type="molecule type" value="Genomic_DNA"/>
</dbReference>
<dbReference type="SMR" id="P61031"/>
<dbReference type="STRING" id="228908.NEQ359"/>
<dbReference type="EnsemblBacteria" id="AAR39208">
    <property type="protein sequence ID" value="AAR39208"/>
    <property type="gene ID" value="NEQ359"/>
</dbReference>
<dbReference type="KEGG" id="neq:NEQ359"/>
<dbReference type="PATRIC" id="fig|228908.8.peg.369"/>
<dbReference type="HOGENOM" id="CLU_178987_2_0_2"/>
<dbReference type="Proteomes" id="UP000000578">
    <property type="component" value="Chromosome"/>
</dbReference>
<dbReference type="GO" id="GO:0022627">
    <property type="term" value="C:cytosolic small ribosomal subunit"/>
    <property type="evidence" value="ECO:0007669"/>
    <property type="project" value="TreeGrafter"/>
</dbReference>
<dbReference type="GO" id="GO:0003735">
    <property type="term" value="F:structural constituent of ribosome"/>
    <property type="evidence" value="ECO:0007669"/>
    <property type="project" value="InterPro"/>
</dbReference>
<dbReference type="GO" id="GO:0030490">
    <property type="term" value="P:maturation of SSU-rRNA"/>
    <property type="evidence" value="ECO:0007669"/>
    <property type="project" value="TreeGrafter"/>
</dbReference>
<dbReference type="GO" id="GO:0000028">
    <property type="term" value="P:ribosomal small subunit assembly"/>
    <property type="evidence" value="ECO:0007669"/>
    <property type="project" value="TreeGrafter"/>
</dbReference>
<dbReference type="GO" id="GO:0006412">
    <property type="term" value="P:translation"/>
    <property type="evidence" value="ECO:0007669"/>
    <property type="project" value="UniProtKB-UniRule"/>
</dbReference>
<dbReference type="CDD" id="cd04457">
    <property type="entry name" value="S1_S28E"/>
    <property type="match status" value="1"/>
</dbReference>
<dbReference type="FunFam" id="2.40.50.140:FF:000145">
    <property type="entry name" value="30S ribosomal protein S28e"/>
    <property type="match status" value="1"/>
</dbReference>
<dbReference type="Gene3D" id="2.40.50.140">
    <property type="entry name" value="Nucleic acid-binding proteins"/>
    <property type="match status" value="1"/>
</dbReference>
<dbReference type="HAMAP" id="MF_00292">
    <property type="entry name" value="Ribosomal_eS28"/>
    <property type="match status" value="1"/>
</dbReference>
<dbReference type="InterPro" id="IPR012340">
    <property type="entry name" value="NA-bd_OB-fold"/>
</dbReference>
<dbReference type="InterPro" id="IPR000289">
    <property type="entry name" value="Ribosomal_eS28"/>
</dbReference>
<dbReference type="NCBIfam" id="NF003080">
    <property type="entry name" value="PRK04007.1"/>
    <property type="match status" value="1"/>
</dbReference>
<dbReference type="PANTHER" id="PTHR10769">
    <property type="entry name" value="40S RIBOSOMAL PROTEIN S28"/>
    <property type="match status" value="1"/>
</dbReference>
<dbReference type="PANTHER" id="PTHR10769:SF3">
    <property type="entry name" value="SMALL RIBOSOMAL SUBUNIT PROTEIN ES28"/>
    <property type="match status" value="1"/>
</dbReference>
<dbReference type="Pfam" id="PF01200">
    <property type="entry name" value="Ribosomal_S28e"/>
    <property type="match status" value="1"/>
</dbReference>
<dbReference type="SUPFAM" id="SSF50249">
    <property type="entry name" value="Nucleic acid-binding proteins"/>
    <property type="match status" value="1"/>
</dbReference>
<reference key="1">
    <citation type="journal article" date="2003" name="Proc. Natl. Acad. Sci. U.S.A.">
        <title>The genome of Nanoarchaeum equitans: insights into early archaeal evolution and derived parasitism.</title>
        <authorList>
            <person name="Waters E."/>
            <person name="Hohn M.J."/>
            <person name="Ahel I."/>
            <person name="Graham D.E."/>
            <person name="Adams M.D."/>
            <person name="Barnstead M."/>
            <person name="Beeson K.Y."/>
            <person name="Bibbs L."/>
            <person name="Bolanos R."/>
            <person name="Keller M."/>
            <person name="Kretz K."/>
            <person name="Lin X."/>
            <person name="Mathur E."/>
            <person name="Ni J."/>
            <person name="Podar M."/>
            <person name="Richardson T."/>
            <person name="Sutton G.G."/>
            <person name="Simon M."/>
            <person name="Soell D."/>
            <person name="Stetter K.O."/>
            <person name="Short J.M."/>
            <person name="Noorderwier M."/>
        </authorList>
    </citation>
    <scope>NUCLEOTIDE SEQUENCE [LARGE SCALE GENOMIC DNA]</scope>
    <source>
        <strain>Kin4-M</strain>
    </source>
</reference>
<proteinExistence type="inferred from homology"/>
<protein>
    <recommendedName>
        <fullName evidence="1">Small ribosomal subunit protein eS28</fullName>
    </recommendedName>
    <alternativeName>
        <fullName evidence="2">30S ribosomal protein S28e</fullName>
    </alternativeName>
</protein>
<feature type="chain" id="PRO_0000136853" description="Small ribosomal subunit protein eS28">
    <location>
        <begin position="1"/>
        <end position="88"/>
    </location>
</feature>
<name>RS28_NANEQ</name>
<comment type="similarity">
    <text evidence="1">Belongs to the eukaryotic ribosomal protein eS28 family.</text>
</comment>
<accession>P61031</accession>
<evidence type="ECO:0000255" key="1">
    <source>
        <dbReference type="HAMAP-Rule" id="MF_00292"/>
    </source>
</evidence>
<evidence type="ECO:0000305" key="2"/>
<gene>
    <name evidence="1" type="primary">rps28e</name>
    <name type="ordered locus">NEQ359</name>
</gene>